<sequence length="414" mass="47012">MTQANLSETLFKPRFKHPETSTLVRRFSHGAQLPVQSALDGKTIPHWYRMINRLMWIWRGIDPREILDVQARIVMSDAERTDDDLYDTVIGYRGGNWIYEWATQAMVWQQKACAEEDPQLSGRHWLHAATLYNIAAYPHLKGDDLAEQAQALSNRAYEEAAQRLPGTMRQMEFTVPGGAPITGFLHMPKGDGPFPTVLMCGGLDAMQTDYYSLYERYFAPRGIAMLTIDMPSVGFSSKWKLTQDSSLLHQHVLKALPNVPWVDHTRVAAFGFRFGANVAVRLAYLESPRLKAVACLGPVVHTLLSDFKCQQQVPEMYLDVLASRLGMHDASDEALRVELNRYSLKVQGLLGRRCPTPMLSGYWKNDPFSPEEDSRLITSSSADGKLLEIPFNPVYRNFDKGLQEITDWIEKRLC</sequence>
<name>FRSA_ECO27</name>
<dbReference type="EC" id="3.1.1.1" evidence="1"/>
<dbReference type="EMBL" id="FM180568">
    <property type="protein sequence ID" value="CAS07780.1"/>
    <property type="molecule type" value="Genomic_DNA"/>
</dbReference>
<dbReference type="RefSeq" id="WP_000189572.1">
    <property type="nucleotide sequence ID" value="NC_011601.1"/>
</dbReference>
<dbReference type="SMR" id="B7UJC7"/>
<dbReference type="ESTHER" id="ecoli-yafa">
    <property type="family name" value="Duf_1100-R"/>
</dbReference>
<dbReference type="KEGG" id="ecg:E2348C_0232"/>
<dbReference type="HOGENOM" id="CLU_036819_0_0_6"/>
<dbReference type="Proteomes" id="UP000008205">
    <property type="component" value="Chromosome"/>
</dbReference>
<dbReference type="GO" id="GO:0106435">
    <property type="term" value="F:carboxylesterase activity"/>
    <property type="evidence" value="ECO:0007669"/>
    <property type="project" value="UniProtKB-EC"/>
</dbReference>
<dbReference type="FunFam" id="3.40.50.1820:FF:000022">
    <property type="entry name" value="Esterase FrsA"/>
    <property type="match status" value="1"/>
</dbReference>
<dbReference type="Gene3D" id="3.40.50.1820">
    <property type="entry name" value="alpha/beta hydrolase"/>
    <property type="match status" value="1"/>
</dbReference>
<dbReference type="HAMAP" id="MF_01063">
    <property type="entry name" value="FrsA"/>
    <property type="match status" value="1"/>
</dbReference>
<dbReference type="InterPro" id="IPR029058">
    <property type="entry name" value="AB_hydrolase_fold"/>
</dbReference>
<dbReference type="InterPro" id="IPR043423">
    <property type="entry name" value="FrsA"/>
</dbReference>
<dbReference type="InterPro" id="IPR010520">
    <property type="entry name" value="FrsA-like"/>
</dbReference>
<dbReference type="InterPro" id="IPR050261">
    <property type="entry name" value="FrsA_esterase"/>
</dbReference>
<dbReference type="NCBIfam" id="NF003460">
    <property type="entry name" value="PRK05077.1"/>
    <property type="match status" value="1"/>
</dbReference>
<dbReference type="PANTHER" id="PTHR22946">
    <property type="entry name" value="DIENELACTONE HYDROLASE DOMAIN-CONTAINING PROTEIN-RELATED"/>
    <property type="match status" value="1"/>
</dbReference>
<dbReference type="PANTHER" id="PTHR22946:SF4">
    <property type="entry name" value="ESTERASE FRSA"/>
    <property type="match status" value="1"/>
</dbReference>
<dbReference type="Pfam" id="PF06500">
    <property type="entry name" value="FrsA-like"/>
    <property type="match status" value="1"/>
</dbReference>
<dbReference type="SUPFAM" id="SSF53474">
    <property type="entry name" value="alpha/beta-Hydrolases"/>
    <property type="match status" value="1"/>
</dbReference>
<evidence type="ECO:0000255" key="1">
    <source>
        <dbReference type="HAMAP-Rule" id="MF_01063"/>
    </source>
</evidence>
<reference key="1">
    <citation type="journal article" date="2009" name="J. Bacteriol.">
        <title>Complete genome sequence and comparative genome analysis of enteropathogenic Escherichia coli O127:H6 strain E2348/69.</title>
        <authorList>
            <person name="Iguchi A."/>
            <person name="Thomson N.R."/>
            <person name="Ogura Y."/>
            <person name="Saunders D."/>
            <person name="Ooka T."/>
            <person name="Henderson I.R."/>
            <person name="Harris D."/>
            <person name="Asadulghani M."/>
            <person name="Kurokawa K."/>
            <person name="Dean P."/>
            <person name="Kenny B."/>
            <person name="Quail M.A."/>
            <person name="Thurston S."/>
            <person name="Dougan G."/>
            <person name="Hayashi T."/>
            <person name="Parkhill J."/>
            <person name="Frankel G."/>
        </authorList>
    </citation>
    <scope>NUCLEOTIDE SEQUENCE [LARGE SCALE GENOMIC DNA]</scope>
    <source>
        <strain>E2348/69 / EPEC</strain>
    </source>
</reference>
<comment type="function">
    <text evidence="1">Catalyzes the hydrolysis of esters.</text>
</comment>
<comment type="catalytic activity">
    <reaction evidence="1">
        <text>a carboxylic ester + H2O = an alcohol + a carboxylate + H(+)</text>
        <dbReference type="Rhea" id="RHEA:21164"/>
        <dbReference type="ChEBI" id="CHEBI:15377"/>
        <dbReference type="ChEBI" id="CHEBI:15378"/>
        <dbReference type="ChEBI" id="CHEBI:29067"/>
        <dbReference type="ChEBI" id="CHEBI:30879"/>
        <dbReference type="ChEBI" id="CHEBI:33308"/>
        <dbReference type="EC" id="3.1.1.1"/>
    </reaction>
</comment>
<comment type="similarity">
    <text evidence="1">Belongs to the FrsA family.</text>
</comment>
<gene>
    <name evidence="1" type="primary">frsA</name>
    <name type="ordered locus">E2348C_0232</name>
</gene>
<accession>B7UJC7</accession>
<feature type="chain" id="PRO_1000149721" description="Esterase FrsA">
    <location>
        <begin position="1"/>
        <end position="414"/>
    </location>
</feature>
<protein>
    <recommendedName>
        <fullName evidence="1">Esterase FrsA</fullName>
        <ecNumber evidence="1">3.1.1.1</ecNumber>
    </recommendedName>
</protein>
<keyword id="KW-0378">Hydrolase</keyword>
<keyword id="KW-1185">Reference proteome</keyword>
<keyword id="KW-0719">Serine esterase</keyword>
<organism>
    <name type="scientific">Escherichia coli O127:H6 (strain E2348/69 / EPEC)</name>
    <dbReference type="NCBI Taxonomy" id="574521"/>
    <lineage>
        <taxon>Bacteria</taxon>
        <taxon>Pseudomonadati</taxon>
        <taxon>Pseudomonadota</taxon>
        <taxon>Gammaproteobacteria</taxon>
        <taxon>Enterobacterales</taxon>
        <taxon>Enterobacteriaceae</taxon>
        <taxon>Escherichia</taxon>
    </lineage>
</organism>
<proteinExistence type="inferred from homology"/>